<protein>
    <recommendedName>
        <fullName evidence="1">SsrA-binding protein</fullName>
    </recommendedName>
    <alternativeName>
        <fullName evidence="1">Small protein B</fullName>
    </alternativeName>
</protein>
<name>SSRP_THEAB</name>
<sequence length="149" mass="17496">MKVIATNKKAYSDYNILETYEAGIELRGTEVKALRESGANFKDSFCRIKNGEVFLLNLNIPQYRNGNLNNHDPERPRRLLLHKKEIHRLIGKVKEQGLTIIPTKIYFNSRGLVKVEIAVAKGKKKYDKREDIKKREINRKINEYLKRNR</sequence>
<proteinExistence type="inferred from homology"/>
<organism>
    <name type="scientific">Thermosipho africanus (strain TCF52B)</name>
    <dbReference type="NCBI Taxonomy" id="484019"/>
    <lineage>
        <taxon>Bacteria</taxon>
        <taxon>Thermotogati</taxon>
        <taxon>Thermotogota</taxon>
        <taxon>Thermotogae</taxon>
        <taxon>Thermotogales</taxon>
        <taxon>Fervidobacteriaceae</taxon>
        <taxon>Thermosipho</taxon>
    </lineage>
</organism>
<comment type="function">
    <text evidence="1">Required for rescue of stalled ribosomes mediated by trans-translation. Binds to transfer-messenger RNA (tmRNA), required for stable association of tmRNA with ribosomes. tmRNA and SmpB together mimic tRNA shape, replacing the anticodon stem-loop with SmpB. tmRNA is encoded by the ssrA gene; the 2 termini fold to resemble tRNA(Ala) and it encodes a 'tag peptide', a short internal open reading frame. During trans-translation Ala-aminoacylated tmRNA acts like a tRNA, entering the A-site of stalled ribosomes, displacing the stalled mRNA. The ribosome then switches to translate the ORF on the tmRNA; the nascent peptide is terminated with the 'tag peptide' encoded by the tmRNA and targeted for degradation. The ribosome is freed to recommence translation, which seems to be the essential function of trans-translation.</text>
</comment>
<comment type="subcellular location">
    <subcellularLocation>
        <location evidence="1">Cytoplasm</location>
    </subcellularLocation>
    <text evidence="1">The tmRNA-SmpB complex associates with stalled 70S ribosomes.</text>
</comment>
<comment type="similarity">
    <text evidence="1">Belongs to the SmpB family.</text>
</comment>
<evidence type="ECO:0000255" key="1">
    <source>
        <dbReference type="HAMAP-Rule" id="MF_00023"/>
    </source>
</evidence>
<keyword id="KW-0963">Cytoplasm</keyword>
<keyword id="KW-1185">Reference proteome</keyword>
<keyword id="KW-0694">RNA-binding</keyword>
<dbReference type="EMBL" id="CP001185">
    <property type="protein sequence ID" value="ACJ74969.1"/>
    <property type="molecule type" value="Genomic_DNA"/>
</dbReference>
<dbReference type="RefSeq" id="WP_004104260.1">
    <property type="nucleotide sequence ID" value="NC_011653.1"/>
</dbReference>
<dbReference type="SMR" id="B7IFV5"/>
<dbReference type="STRING" id="484019.THA_478"/>
<dbReference type="KEGG" id="taf:THA_478"/>
<dbReference type="eggNOG" id="COG0691">
    <property type="taxonomic scope" value="Bacteria"/>
</dbReference>
<dbReference type="HOGENOM" id="CLU_108953_0_0_0"/>
<dbReference type="OrthoDB" id="9805462at2"/>
<dbReference type="Proteomes" id="UP000002453">
    <property type="component" value="Chromosome"/>
</dbReference>
<dbReference type="GO" id="GO:0005829">
    <property type="term" value="C:cytosol"/>
    <property type="evidence" value="ECO:0007669"/>
    <property type="project" value="TreeGrafter"/>
</dbReference>
<dbReference type="GO" id="GO:0003723">
    <property type="term" value="F:RNA binding"/>
    <property type="evidence" value="ECO:0007669"/>
    <property type="project" value="UniProtKB-UniRule"/>
</dbReference>
<dbReference type="GO" id="GO:0070929">
    <property type="term" value="P:trans-translation"/>
    <property type="evidence" value="ECO:0007669"/>
    <property type="project" value="UniProtKB-UniRule"/>
</dbReference>
<dbReference type="CDD" id="cd09294">
    <property type="entry name" value="SmpB"/>
    <property type="match status" value="1"/>
</dbReference>
<dbReference type="Gene3D" id="2.40.280.10">
    <property type="match status" value="1"/>
</dbReference>
<dbReference type="HAMAP" id="MF_00023">
    <property type="entry name" value="SmpB"/>
    <property type="match status" value="1"/>
</dbReference>
<dbReference type="InterPro" id="IPR023620">
    <property type="entry name" value="SmpB"/>
</dbReference>
<dbReference type="InterPro" id="IPR000037">
    <property type="entry name" value="SsrA-bd_prot"/>
</dbReference>
<dbReference type="InterPro" id="IPR020081">
    <property type="entry name" value="SsrA-bd_prot_CS"/>
</dbReference>
<dbReference type="NCBIfam" id="NF003843">
    <property type="entry name" value="PRK05422.1"/>
    <property type="match status" value="1"/>
</dbReference>
<dbReference type="NCBIfam" id="TIGR00086">
    <property type="entry name" value="smpB"/>
    <property type="match status" value="1"/>
</dbReference>
<dbReference type="PANTHER" id="PTHR30308:SF2">
    <property type="entry name" value="SSRA-BINDING PROTEIN"/>
    <property type="match status" value="1"/>
</dbReference>
<dbReference type="PANTHER" id="PTHR30308">
    <property type="entry name" value="TMRNA-BINDING COMPONENT OF TRANS-TRANSLATION TAGGING COMPLEX"/>
    <property type="match status" value="1"/>
</dbReference>
<dbReference type="Pfam" id="PF01668">
    <property type="entry name" value="SmpB"/>
    <property type="match status" value="1"/>
</dbReference>
<dbReference type="SUPFAM" id="SSF74982">
    <property type="entry name" value="Small protein B (SmpB)"/>
    <property type="match status" value="1"/>
</dbReference>
<dbReference type="PROSITE" id="PS01317">
    <property type="entry name" value="SSRP"/>
    <property type="match status" value="1"/>
</dbReference>
<feature type="chain" id="PRO_1000116428" description="SsrA-binding protein">
    <location>
        <begin position="1"/>
        <end position="149"/>
    </location>
</feature>
<accession>B7IFV5</accession>
<reference key="1">
    <citation type="journal article" date="2009" name="J. Bacteriol.">
        <title>The genome of Thermosipho africanus TCF52B: lateral genetic connections to the Firmicutes and Archaea.</title>
        <authorList>
            <person name="Nesboe C.L."/>
            <person name="Bapteste E."/>
            <person name="Curtis B."/>
            <person name="Dahle H."/>
            <person name="Lopez P."/>
            <person name="Macleod D."/>
            <person name="Dlutek M."/>
            <person name="Bowman S."/>
            <person name="Zhaxybayeva O."/>
            <person name="Birkeland N.-K."/>
            <person name="Doolittle W.F."/>
        </authorList>
    </citation>
    <scope>NUCLEOTIDE SEQUENCE [LARGE SCALE GENOMIC DNA]</scope>
    <source>
        <strain>TCF52B</strain>
    </source>
</reference>
<gene>
    <name evidence="1" type="primary">smpB</name>
    <name type="ordered locus">THA_478</name>
</gene>